<protein>
    <recommendedName>
        <fullName>Subtilisin-like protease 4</fullName>
        <ecNumber>3.4.21.-</ecNumber>
    </recommendedName>
</protein>
<keyword id="KW-0325">Glycoprotein</keyword>
<keyword id="KW-0378">Hydrolase</keyword>
<keyword id="KW-0645">Protease</keyword>
<keyword id="KW-1185">Reference proteome</keyword>
<keyword id="KW-0964">Secreted</keyword>
<keyword id="KW-0720">Serine protease</keyword>
<keyword id="KW-0732">Signal</keyword>
<keyword id="KW-0843">Virulence</keyword>
<keyword id="KW-0865">Zymogen</keyword>
<sequence>MVCLKTLSVFLAAFAAADARAVFKTQGHKNSEMIPDNYIVVMKDGVSQDDFKAHISSVASIHSTNKAKRGTNTQGMKREFDIMNWRGYHGHFDRDTLEEILNDSKVDYVEQDQVVRISGLVTQRSAPSWGLGRVSHRQAGSRDYVFDDSAGRGVTIYGVDTGIDINHQDFRGRARWGTNTADRDNADRHGHGTHTASTFAGTAYGIAKNANIVAVKVLGSDGSGSTSGIIAGINYCVQDAQQRGILGKAAMNLSLGGGFSQANNDAVTRAQNAGIFVAVAAGNDNRDARNYSPASAPAVCTVASSTINDSKSSFSNWGPVVDIYAPGSDIIAARPGGGSTTMSGTSMASPHVAGMGAYMIGMGADPRQVCDRLKQLATAAIRNPGSSTTNRLLYNGSGQ</sequence>
<name>SUB4_ARTBC</name>
<organism>
    <name type="scientific">Arthroderma benhamiae (strain ATCC MYA-4681 / CBS 112371)</name>
    <name type="common">Trichophyton mentagrophytes</name>
    <dbReference type="NCBI Taxonomy" id="663331"/>
    <lineage>
        <taxon>Eukaryota</taxon>
        <taxon>Fungi</taxon>
        <taxon>Dikarya</taxon>
        <taxon>Ascomycota</taxon>
        <taxon>Pezizomycotina</taxon>
        <taxon>Eurotiomycetes</taxon>
        <taxon>Eurotiomycetidae</taxon>
        <taxon>Onygenales</taxon>
        <taxon>Arthrodermataceae</taxon>
        <taxon>Trichophyton</taxon>
    </lineage>
</organism>
<gene>
    <name type="primary">SUB4</name>
    <name type="ORF">ARB_01032</name>
</gene>
<proteinExistence type="evidence at protein level"/>
<feature type="signal peptide" evidence="2">
    <location>
        <begin position="1"/>
        <end position="19"/>
    </location>
</feature>
<feature type="propeptide" id="PRO_0000397790" evidence="1">
    <location>
        <begin position="20"/>
        <end position="118"/>
    </location>
</feature>
<feature type="chain" id="PRO_0000397791" description="Subtilisin-like protease 4">
    <location>
        <begin position="119"/>
        <end position="399"/>
    </location>
</feature>
<feature type="domain" description="Inhibitor I9" evidence="2">
    <location>
        <begin position="38"/>
        <end position="117"/>
    </location>
</feature>
<feature type="domain" description="Peptidase S8" evidence="3">
    <location>
        <begin position="128"/>
        <end position="399"/>
    </location>
</feature>
<feature type="active site" description="Charge relay system" evidence="3">
    <location>
        <position position="160"/>
    </location>
</feature>
<feature type="active site" description="Charge relay system" evidence="3">
    <location>
        <position position="191"/>
    </location>
</feature>
<feature type="active site" description="Charge relay system" evidence="3">
    <location>
        <position position="346"/>
    </location>
</feature>
<feature type="glycosylation site" description="N-linked (GlcNAc...) asparagine" evidence="2">
    <location>
        <position position="252"/>
    </location>
</feature>
<feature type="glycosylation site" description="N-linked (GlcNAc...) asparagine" evidence="2">
    <location>
        <position position="308"/>
    </location>
</feature>
<feature type="glycosylation site" description="N-linked (GlcNAc...) asparagine" evidence="2">
    <location>
        <position position="395"/>
    </location>
</feature>
<comment type="function">
    <text evidence="1">Secreted subtilisin-like serine protease with keratinolytic activity that contributes to pathogenicity.</text>
</comment>
<comment type="subcellular location">
    <subcellularLocation>
        <location evidence="4">Secreted</location>
    </subcellularLocation>
</comment>
<comment type="similarity">
    <text evidence="5">Belongs to the peptidase S8 family.</text>
</comment>
<comment type="sequence caution" evidence="5">
    <conflict type="erroneous gene model prediction">
        <sequence resource="EMBL-CDS" id="EFE32141"/>
    </conflict>
</comment>
<dbReference type="EC" id="3.4.21.-"/>
<dbReference type="EMBL" id="ABSU01000017">
    <property type="protein sequence ID" value="EFE32141.1"/>
    <property type="status" value="ALT_SEQ"/>
    <property type="molecule type" value="Genomic_DNA"/>
</dbReference>
<dbReference type="RefSeq" id="XP_003012781.1">
    <property type="nucleotide sequence ID" value="XM_003012735.1"/>
</dbReference>
<dbReference type="SMR" id="D4AXW3"/>
<dbReference type="GlyCosmos" id="D4AXW3">
    <property type="glycosylation" value="3 sites, No reported glycans"/>
</dbReference>
<dbReference type="GeneID" id="9522859"/>
<dbReference type="KEGG" id="abe:ARB_01032"/>
<dbReference type="eggNOG" id="KOG1153">
    <property type="taxonomic scope" value="Eukaryota"/>
</dbReference>
<dbReference type="HOGENOM" id="CLU_011263_1_3_1"/>
<dbReference type="OrthoDB" id="206201at2759"/>
<dbReference type="Proteomes" id="UP000008866">
    <property type="component" value="Unassembled WGS sequence"/>
</dbReference>
<dbReference type="GO" id="GO:0005576">
    <property type="term" value="C:extracellular region"/>
    <property type="evidence" value="ECO:0007669"/>
    <property type="project" value="UniProtKB-SubCell"/>
</dbReference>
<dbReference type="GO" id="GO:0004252">
    <property type="term" value="F:serine-type endopeptidase activity"/>
    <property type="evidence" value="ECO:0007669"/>
    <property type="project" value="InterPro"/>
</dbReference>
<dbReference type="GO" id="GO:0006508">
    <property type="term" value="P:proteolysis"/>
    <property type="evidence" value="ECO:0007669"/>
    <property type="project" value="UniProtKB-KW"/>
</dbReference>
<dbReference type="CDD" id="cd04077">
    <property type="entry name" value="Peptidases_S8_PCSK9_ProteinaseK_like"/>
    <property type="match status" value="1"/>
</dbReference>
<dbReference type="FunFam" id="3.40.50.200:FF:000014">
    <property type="entry name" value="Proteinase K"/>
    <property type="match status" value="1"/>
</dbReference>
<dbReference type="Gene3D" id="3.30.70.80">
    <property type="entry name" value="Peptidase S8 propeptide/proteinase inhibitor I9"/>
    <property type="match status" value="1"/>
</dbReference>
<dbReference type="Gene3D" id="3.40.50.200">
    <property type="entry name" value="Peptidase S8/S53 domain"/>
    <property type="match status" value="1"/>
</dbReference>
<dbReference type="InterPro" id="IPR034193">
    <property type="entry name" value="PCSK9_ProteinaseK-like"/>
</dbReference>
<dbReference type="InterPro" id="IPR000209">
    <property type="entry name" value="Peptidase_S8/S53_dom"/>
</dbReference>
<dbReference type="InterPro" id="IPR036852">
    <property type="entry name" value="Peptidase_S8/S53_dom_sf"/>
</dbReference>
<dbReference type="InterPro" id="IPR023828">
    <property type="entry name" value="Peptidase_S8_Ser-AS"/>
</dbReference>
<dbReference type="InterPro" id="IPR050131">
    <property type="entry name" value="Peptidase_S8_subtilisin-like"/>
</dbReference>
<dbReference type="InterPro" id="IPR015500">
    <property type="entry name" value="Peptidase_S8_subtilisin-rel"/>
</dbReference>
<dbReference type="InterPro" id="IPR010259">
    <property type="entry name" value="S8pro/Inhibitor_I9"/>
</dbReference>
<dbReference type="InterPro" id="IPR037045">
    <property type="entry name" value="S8pro/Inhibitor_I9_sf"/>
</dbReference>
<dbReference type="PANTHER" id="PTHR43806:SF11">
    <property type="entry name" value="CEREVISIN-RELATED"/>
    <property type="match status" value="1"/>
</dbReference>
<dbReference type="PANTHER" id="PTHR43806">
    <property type="entry name" value="PEPTIDASE S8"/>
    <property type="match status" value="1"/>
</dbReference>
<dbReference type="Pfam" id="PF05922">
    <property type="entry name" value="Inhibitor_I9"/>
    <property type="match status" value="1"/>
</dbReference>
<dbReference type="Pfam" id="PF00082">
    <property type="entry name" value="Peptidase_S8"/>
    <property type="match status" value="1"/>
</dbReference>
<dbReference type="PRINTS" id="PR00723">
    <property type="entry name" value="SUBTILISIN"/>
</dbReference>
<dbReference type="SUPFAM" id="SSF54897">
    <property type="entry name" value="Protease propeptides/inhibitors"/>
    <property type="match status" value="1"/>
</dbReference>
<dbReference type="SUPFAM" id="SSF52743">
    <property type="entry name" value="Subtilisin-like"/>
    <property type="match status" value="1"/>
</dbReference>
<dbReference type="PROSITE" id="PS51892">
    <property type="entry name" value="SUBTILASE"/>
    <property type="match status" value="1"/>
</dbReference>
<dbReference type="PROSITE" id="PS00138">
    <property type="entry name" value="SUBTILASE_SER"/>
    <property type="match status" value="1"/>
</dbReference>
<reference key="1">
    <citation type="journal article" date="2011" name="Genome Biol.">
        <title>Comparative and functional genomics provide insights into the pathogenicity of dermatophytic fungi.</title>
        <authorList>
            <person name="Burmester A."/>
            <person name="Shelest E."/>
            <person name="Gloeckner G."/>
            <person name="Heddergott C."/>
            <person name="Schindler S."/>
            <person name="Staib P."/>
            <person name="Heidel A."/>
            <person name="Felder M."/>
            <person name="Petzold A."/>
            <person name="Szafranski K."/>
            <person name="Feuermann M."/>
            <person name="Pedruzzi I."/>
            <person name="Priebe S."/>
            <person name="Groth M."/>
            <person name="Winkler R."/>
            <person name="Li W."/>
            <person name="Kniemeyer O."/>
            <person name="Schroeckh V."/>
            <person name="Hertweck C."/>
            <person name="Hube B."/>
            <person name="White T.C."/>
            <person name="Platzer M."/>
            <person name="Guthke R."/>
            <person name="Heitman J."/>
            <person name="Woestemeyer J."/>
            <person name="Zipfel P.F."/>
            <person name="Monod M."/>
            <person name="Brakhage A.A."/>
        </authorList>
    </citation>
    <scope>NUCLEOTIDE SEQUENCE [LARGE SCALE GENOMIC DNA]</scope>
    <scope>IDENTIFICATION BY MASS SPECTROMETRY</scope>
    <scope>SUBCELLULAR LOCATION</scope>
    <source>
        <strain>ATCC MYA-4681 / CBS 112371</strain>
    </source>
</reference>
<evidence type="ECO:0000250" key="1"/>
<evidence type="ECO:0000255" key="2"/>
<evidence type="ECO:0000255" key="3">
    <source>
        <dbReference type="PROSITE-ProRule" id="PRU01240"/>
    </source>
</evidence>
<evidence type="ECO:0000269" key="4">
    <source>
    </source>
</evidence>
<evidence type="ECO:0000305" key="5"/>
<accession>D4AXW3</accession>